<accession>Q8WKA5</accession>
<proteinExistence type="inferred from homology"/>
<feature type="chain" id="PRO_0000143637" description="Maturase K">
    <location>
        <begin position="1"/>
        <end position="515"/>
    </location>
</feature>
<comment type="function">
    <text evidence="1">Usually encoded in the trnK tRNA gene intron. Probably assists in splicing its own and other chloroplast group II introns.</text>
</comment>
<comment type="subcellular location">
    <subcellularLocation>
        <location>Plastid</location>
        <location>Chloroplast</location>
    </subcellularLocation>
</comment>
<comment type="similarity">
    <text evidence="1">Belongs to the intron maturase 2 family. MatK subfamily.</text>
</comment>
<organism>
    <name type="scientific">Pinus virginiana</name>
    <name type="common">Virginia pine</name>
    <dbReference type="NCBI Taxonomy" id="71654"/>
    <lineage>
        <taxon>Eukaryota</taxon>
        <taxon>Viridiplantae</taxon>
        <taxon>Streptophyta</taxon>
        <taxon>Embryophyta</taxon>
        <taxon>Tracheophyta</taxon>
        <taxon>Spermatophyta</taxon>
        <taxon>Pinopsida</taxon>
        <taxon>Pinidae</taxon>
        <taxon>Conifers I</taxon>
        <taxon>Pinales</taxon>
        <taxon>Pinaceae</taxon>
        <taxon>Pinus</taxon>
        <taxon>Pinus subgen. Pinus</taxon>
    </lineage>
</organism>
<sequence>MDEFHRCGKEDSFWQQCFLYPLFFKEDLYAISHDHYLDVSSSSRPMEHLSSNDQLSFLTVKRLIGQIRQQNHSIVLFVNCDPNPLADRKKSFYSESVLEALTLVLEVPFSIWSKYSVEGMNESKSFRSIHSIFPFLEDKFPHSNSILDARIPYSIHPEILVRTFRRWIRDAPSLHPLRSVLYEYRNSTENLQRSIIVVPRVNTRFFLFLWNYYVCECESILFSRLKRSSHSRSLSHGSFPQRTHFHRKIKHIIIFSRRNSLKSIWSLKDPKIHYVRYGERPIIAIKGAHLLVKKCRYYLLIFRQFYFHLWSEPYRVCSHQLSKNCSSSPGYFLRVRMNPILVRTKMLDELFIADLITDEIDPIVPIVPIIGLLATEKFCDISGRPISKLSWTSLTDDDILDRFDQIWRNLFHYYSGSFDRDGLYRIKYILSLSCAKTLACKHKSTIRVVRKELGPELFKKSFSKEREFDSLPFSSKAAARSQRERIWHSDIPQINPLANSWQKIQDLKIGNLFDQ</sequence>
<geneLocation type="chloroplast"/>
<name>MATK_PINVI</name>
<protein>
    <recommendedName>
        <fullName evidence="1">Maturase K</fullName>
    </recommendedName>
    <alternativeName>
        <fullName evidence="1">Intron maturase</fullName>
    </alternativeName>
</protein>
<gene>
    <name evidence="1" type="primary">matK</name>
</gene>
<reference key="1">
    <citation type="submission" date="2002-03" db="EMBL/GenBank/DDBJ databases">
        <title>Phylogeny of the North American pines.</title>
        <authorList>
            <person name="Geada Lopez G."/>
            <person name="Kamiya K."/>
            <person name="Harada K."/>
        </authorList>
    </citation>
    <scope>NUCLEOTIDE SEQUENCE [GENOMIC DNA]</scope>
    <source>
        <tissue>Leaf</tissue>
    </source>
</reference>
<reference key="2">
    <citation type="submission" date="2001-06" db="EMBL/GenBank/DDBJ databases">
        <title>Phylogenetic relationships of diploxylon pines based on plastid sequence data.</title>
        <authorList>
            <person name="Geada Lopez G."/>
            <person name="Kamiya K."/>
            <person name="Harada K."/>
        </authorList>
    </citation>
    <scope>NUCLEOTIDE SEQUENCE [GENOMIC DNA] OF 241-515</scope>
</reference>
<evidence type="ECO:0000255" key="1">
    <source>
        <dbReference type="HAMAP-Rule" id="MF_01390"/>
    </source>
</evidence>
<keyword id="KW-0150">Chloroplast</keyword>
<keyword id="KW-0507">mRNA processing</keyword>
<keyword id="KW-0934">Plastid</keyword>
<keyword id="KW-0694">RNA-binding</keyword>
<keyword id="KW-0819">tRNA processing</keyword>
<dbReference type="EMBL" id="AB080923">
    <property type="protein sequence ID" value="BAC11926.1"/>
    <property type="molecule type" value="Genomic_DNA"/>
</dbReference>
<dbReference type="EMBL" id="AB063511">
    <property type="protein sequence ID" value="BAB79556.1"/>
    <property type="molecule type" value="Genomic_DNA"/>
</dbReference>
<dbReference type="GO" id="GO:0009507">
    <property type="term" value="C:chloroplast"/>
    <property type="evidence" value="ECO:0007669"/>
    <property type="project" value="UniProtKB-SubCell"/>
</dbReference>
<dbReference type="GO" id="GO:0003723">
    <property type="term" value="F:RNA binding"/>
    <property type="evidence" value="ECO:0007669"/>
    <property type="project" value="UniProtKB-KW"/>
</dbReference>
<dbReference type="GO" id="GO:0006397">
    <property type="term" value="P:mRNA processing"/>
    <property type="evidence" value="ECO:0007669"/>
    <property type="project" value="UniProtKB-KW"/>
</dbReference>
<dbReference type="GO" id="GO:0008380">
    <property type="term" value="P:RNA splicing"/>
    <property type="evidence" value="ECO:0007669"/>
    <property type="project" value="UniProtKB-UniRule"/>
</dbReference>
<dbReference type="GO" id="GO:0008033">
    <property type="term" value="P:tRNA processing"/>
    <property type="evidence" value="ECO:0007669"/>
    <property type="project" value="UniProtKB-KW"/>
</dbReference>
<dbReference type="HAMAP" id="MF_01390">
    <property type="entry name" value="MatK"/>
    <property type="match status" value="1"/>
</dbReference>
<dbReference type="InterPro" id="IPR024937">
    <property type="entry name" value="Domain_X"/>
</dbReference>
<dbReference type="InterPro" id="IPR002866">
    <property type="entry name" value="Maturase_MatK"/>
</dbReference>
<dbReference type="InterPro" id="IPR024942">
    <property type="entry name" value="Maturase_MatK_N"/>
</dbReference>
<dbReference type="PANTHER" id="PTHR34811">
    <property type="entry name" value="MATURASE K"/>
    <property type="match status" value="1"/>
</dbReference>
<dbReference type="PANTHER" id="PTHR34811:SF1">
    <property type="entry name" value="MATURASE K"/>
    <property type="match status" value="1"/>
</dbReference>
<dbReference type="Pfam" id="PF01348">
    <property type="entry name" value="Intron_maturas2"/>
    <property type="match status" value="1"/>
</dbReference>
<dbReference type="Pfam" id="PF01824">
    <property type="entry name" value="MatK_N"/>
    <property type="match status" value="1"/>
</dbReference>